<sequence length="107" mass="11856">MMKVLVVVALLVTLISYSSSEGIDDLEADELSSLMANEQTRKECIPKHHECTSNKHGCCRGNFFKYKCQCTTVVTQDGEQTERCFCGTPPHHKAAELVVGFGKKIFG</sequence>
<accession>B6DCK0</accession>
<feature type="signal peptide" evidence="2">
    <location>
        <begin position="1"/>
        <end position="20"/>
    </location>
</feature>
<feature type="propeptide" id="PRO_0000401519" evidence="1">
    <location>
        <begin position="21"/>
        <end position="41"/>
    </location>
</feature>
<feature type="chain" id="PRO_0000401520" description="U1-lycotoxin-Ls1b">
    <location>
        <begin position="42"/>
        <end position="107"/>
    </location>
</feature>
<feature type="disulfide bond" evidence="1">
    <location>
        <begin position="44"/>
        <end position="59"/>
    </location>
</feature>
<feature type="disulfide bond" evidence="1">
    <location>
        <begin position="51"/>
        <end position="68"/>
    </location>
</feature>
<feature type="disulfide bond" evidence="1">
    <location>
        <begin position="58"/>
        <end position="86"/>
    </location>
</feature>
<feature type="disulfide bond" evidence="1">
    <location>
        <begin position="70"/>
        <end position="84"/>
    </location>
</feature>
<comment type="subcellular location">
    <subcellularLocation>
        <location evidence="1">Secreted</location>
    </subcellularLocation>
</comment>
<comment type="tissue specificity">
    <text>Expressed by the venom gland.</text>
</comment>
<comment type="domain">
    <text evidence="1">The presence of a 'disulfide through disulfide knot' structurally defines this protein as a knottin.</text>
</comment>
<comment type="similarity">
    <text evidence="3">Belongs to the neurotoxin 19 (CSTX) family. 04 (U1-Lctx) subfamily.</text>
</comment>
<reference key="1">
    <citation type="journal article" date="2010" name="Zoology">
        <title>Transcriptome analysis of the venom glands of the Chinese wolf spider Lycosa singoriensis.</title>
        <authorList>
            <person name="Zhang Y."/>
            <person name="Chen J."/>
            <person name="Tang X."/>
            <person name="Wang F."/>
            <person name="Jiang L."/>
            <person name="Xiong X."/>
            <person name="Wang M."/>
            <person name="Rong M."/>
            <person name="Liu Z."/>
            <person name="Liang S."/>
        </authorList>
    </citation>
    <scope>NUCLEOTIDE SEQUENCE [LARGE SCALE MRNA]</scope>
    <source>
        <tissue>Venom gland</tissue>
    </source>
</reference>
<proteinExistence type="evidence at transcript level"/>
<organism>
    <name type="scientific">Lycosa singoriensis</name>
    <name type="common">Wolf spider</name>
    <name type="synonym">Aranea singoriensis</name>
    <dbReference type="NCBI Taxonomy" id="434756"/>
    <lineage>
        <taxon>Eukaryota</taxon>
        <taxon>Metazoa</taxon>
        <taxon>Ecdysozoa</taxon>
        <taxon>Arthropoda</taxon>
        <taxon>Chelicerata</taxon>
        <taxon>Arachnida</taxon>
        <taxon>Araneae</taxon>
        <taxon>Araneomorphae</taxon>
        <taxon>Entelegynae</taxon>
        <taxon>Lycosoidea</taxon>
        <taxon>Lycosidae</taxon>
        <taxon>Lycosa</taxon>
    </lineage>
</organism>
<keyword id="KW-1015">Disulfide bond</keyword>
<keyword id="KW-0960">Knottin</keyword>
<keyword id="KW-0964">Secreted</keyword>
<keyword id="KW-0732">Signal</keyword>
<keyword id="KW-0800">Toxin</keyword>
<dbReference type="EMBL" id="EU925934">
    <property type="protein sequence ID" value="ACI41266.1"/>
    <property type="molecule type" value="mRNA"/>
</dbReference>
<dbReference type="EMBL" id="FM863938">
    <property type="protein sequence ID" value="CAS03536.1"/>
    <property type="molecule type" value="mRNA"/>
</dbReference>
<dbReference type="SMR" id="B6DCK0"/>
<dbReference type="ArachnoServer" id="AS000884">
    <property type="toxin name" value="U1-lycotoxin-Ls1b"/>
</dbReference>
<dbReference type="GO" id="GO:0005576">
    <property type="term" value="C:extracellular region"/>
    <property type="evidence" value="ECO:0007669"/>
    <property type="project" value="UniProtKB-SubCell"/>
</dbReference>
<dbReference type="GO" id="GO:0090729">
    <property type="term" value="F:toxin activity"/>
    <property type="evidence" value="ECO:0007669"/>
    <property type="project" value="UniProtKB-KW"/>
</dbReference>
<dbReference type="InterPro" id="IPR019553">
    <property type="entry name" value="Spider_toxin_CSTX_knottin"/>
</dbReference>
<dbReference type="InterPro" id="IPR011142">
    <property type="entry name" value="Spider_toxin_CSTX_Knottin_CS"/>
</dbReference>
<dbReference type="Pfam" id="PF10530">
    <property type="entry name" value="Toxin_35"/>
    <property type="match status" value="1"/>
</dbReference>
<dbReference type="PROSITE" id="PS60029">
    <property type="entry name" value="SPIDER_CSTX"/>
    <property type="match status" value="1"/>
</dbReference>
<name>TX111_LYCSI</name>
<protein>
    <recommendedName>
        <fullName>U1-lycotoxin-Ls1b</fullName>
    </recommendedName>
    <alternativeName>
        <fullName>Toxin-like structure LSTX-A11</fullName>
    </alternativeName>
</protein>
<evidence type="ECO:0000250" key="1"/>
<evidence type="ECO:0000255" key="2"/>
<evidence type="ECO:0000305" key="3"/>